<dbReference type="EC" id="2.1.2.10" evidence="1"/>
<dbReference type="EMBL" id="CP000472">
    <property type="protein sequence ID" value="ACJ27719.1"/>
    <property type="molecule type" value="Genomic_DNA"/>
</dbReference>
<dbReference type="RefSeq" id="WP_020911097.1">
    <property type="nucleotide sequence ID" value="NC_011566.1"/>
</dbReference>
<dbReference type="SMR" id="B8CK16"/>
<dbReference type="STRING" id="225849.swp_0913"/>
<dbReference type="KEGG" id="swp:swp_0913"/>
<dbReference type="eggNOG" id="COG0404">
    <property type="taxonomic scope" value="Bacteria"/>
</dbReference>
<dbReference type="HOGENOM" id="CLU_007884_10_2_6"/>
<dbReference type="OrthoDB" id="9774591at2"/>
<dbReference type="Proteomes" id="UP000000753">
    <property type="component" value="Chromosome"/>
</dbReference>
<dbReference type="GO" id="GO:0005829">
    <property type="term" value="C:cytosol"/>
    <property type="evidence" value="ECO:0007669"/>
    <property type="project" value="TreeGrafter"/>
</dbReference>
<dbReference type="GO" id="GO:0005960">
    <property type="term" value="C:glycine cleavage complex"/>
    <property type="evidence" value="ECO:0007669"/>
    <property type="project" value="InterPro"/>
</dbReference>
<dbReference type="GO" id="GO:0004047">
    <property type="term" value="F:aminomethyltransferase activity"/>
    <property type="evidence" value="ECO:0007669"/>
    <property type="project" value="UniProtKB-UniRule"/>
</dbReference>
<dbReference type="GO" id="GO:0008483">
    <property type="term" value="F:transaminase activity"/>
    <property type="evidence" value="ECO:0007669"/>
    <property type="project" value="UniProtKB-KW"/>
</dbReference>
<dbReference type="GO" id="GO:0019464">
    <property type="term" value="P:glycine decarboxylation via glycine cleavage system"/>
    <property type="evidence" value="ECO:0007669"/>
    <property type="project" value="UniProtKB-UniRule"/>
</dbReference>
<dbReference type="FunFam" id="2.40.30.110:FF:000001">
    <property type="entry name" value="Aminomethyltransferase"/>
    <property type="match status" value="1"/>
</dbReference>
<dbReference type="FunFam" id="3.30.70.1400:FF:000001">
    <property type="entry name" value="Aminomethyltransferase"/>
    <property type="match status" value="1"/>
</dbReference>
<dbReference type="FunFam" id="4.10.1250.10:FF:000001">
    <property type="entry name" value="Aminomethyltransferase"/>
    <property type="match status" value="1"/>
</dbReference>
<dbReference type="Gene3D" id="2.40.30.110">
    <property type="entry name" value="Aminomethyltransferase beta-barrel domains"/>
    <property type="match status" value="1"/>
</dbReference>
<dbReference type="Gene3D" id="3.30.70.1400">
    <property type="entry name" value="Aminomethyltransferase beta-barrel domains"/>
    <property type="match status" value="1"/>
</dbReference>
<dbReference type="Gene3D" id="4.10.1250.10">
    <property type="entry name" value="Aminomethyltransferase fragment"/>
    <property type="match status" value="1"/>
</dbReference>
<dbReference type="Gene3D" id="3.30.1360.120">
    <property type="entry name" value="Probable tRNA modification gtpase trme, domain 1"/>
    <property type="match status" value="1"/>
</dbReference>
<dbReference type="HAMAP" id="MF_00259">
    <property type="entry name" value="GcvT"/>
    <property type="match status" value="1"/>
</dbReference>
<dbReference type="InterPro" id="IPR006223">
    <property type="entry name" value="GCS_T"/>
</dbReference>
<dbReference type="InterPro" id="IPR022903">
    <property type="entry name" value="GCS_T_bac"/>
</dbReference>
<dbReference type="InterPro" id="IPR013977">
    <property type="entry name" value="GCST_C"/>
</dbReference>
<dbReference type="InterPro" id="IPR006222">
    <property type="entry name" value="GCV_T_N"/>
</dbReference>
<dbReference type="InterPro" id="IPR028896">
    <property type="entry name" value="GcvT/YgfZ/DmdA"/>
</dbReference>
<dbReference type="InterPro" id="IPR029043">
    <property type="entry name" value="GcvT/YgfZ_C"/>
</dbReference>
<dbReference type="InterPro" id="IPR027266">
    <property type="entry name" value="TrmE/GcvT_dom1"/>
</dbReference>
<dbReference type="NCBIfam" id="TIGR00528">
    <property type="entry name" value="gcvT"/>
    <property type="match status" value="1"/>
</dbReference>
<dbReference type="NCBIfam" id="NF001567">
    <property type="entry name" value="PRK00389.1"/>
    <property type="match status" value="1"/>
</dbReference>
<dbReference type="PANTHER" id="PTHR43757">
    <property type="entry name" value="AMINOMETHYLTRANSFERASE"/>
    <property type="match status" value="1"/>
</dbReference>
<dbReference type="PANTHER" id="PTHR43757:SF2">
    <property type="entry name" value="AMINOMETHYLTRANSFERASE, MITOCHONDRIAL"/>
    <property type="match status" value="1"/>
</dbReference>
<dbReference type="Pfam" id="PF01571">
    <property type="entry name" value="GCV_T"/>
    <property type="match status" value="1"/>
</dbReference>
<dbReference type="Pfam" id="PF08669">
    <property type="entry name" value="GCV_T_C"/>
    <property type="match status" value="1"/>
</dbReference>
<dbReference type="PIRSF" id="PIRSF006487">
    <property type="entry name" value="GcvT"/>
    <property type="match status" value="1"/>
</dbReference>
<dbReference type="SUPFAM" id="SSF101790">
    <property type="entry name" value="Aminomethyltransferase beta-barrel domain"/>
    <property type="match status" value="1"/>
</dbReference>
<dbReference type="SUPFAM" id="SSF103025">
    <property type="entry name" value="Folate-binding domain"/>
    <property type="match status" value="1"/>
</dbReference>
<name>GCST_SHEPW</name>
<comment type="function">
    <text evidence="1">The glycine cleavage system catalyzes the degradation of glycine.</text>
</comment>
<comment type="catalytic activity">
    <reaction evidence="1">
        <text>N(6)-[(R)-S(8)-aminomethyldihydrolipoyl]-L-lysyl-[protein] + (6S)-5,6,7,8-tetrahydrofolate = N(6)-[(R)-dihydrolipoyl]-L-lysyl-[protein] + (6R)-5,10-methylene-5,6,7,8-tetrahydrofolate + NH4(+)</text>
        <dbReference type="Rhea" id="RHEA:16945"/>
        <dbReference type="Rhea" id="RHEA-COMP:10475"/>
        <dbReference type="Rhea" id="RHEA-COMP:10492"/>
        <dbReference type="ChEBI" id="CHEBI:15636"/>
        <dbReference type="ChEBI" id="CHEBI:28938"/>
        <dbReference type="ChEBI" id="CHEBI:57453"/>
        <dbReference type="ChEBI" id="CHEBI:83100"/>
        <dbReference type="ChEBI" id="CHEBI:83143"/>
        <dbReference type="EC" id="2.1.2.10"/>
    </reaction>
</comment>
<comment type="subunit">
    <text evidence="1">The glycine cleavage system is composed of four proteins: P, T, L and H.</text>
</comment>
<comment type="similarity">
    <text evidence="1">Belongs to the GcvT family.</text>
</comment>
<sequence length="364" mass="39604">MANKTVLFNKHLESNGKMVDFHGWDMPLNYGSQIEEHHAVRQDAGMFDVSHMTVVDVIGDDACAFLRKLLANDVAKLKVPGKALYGGMLDHNGGVIDDLITYYLSDTQYRIVVNSATREKDLAWINEQVKGFSVEVTERPELAMIAVQGPNAKAKAATVFNDTQNAAVEGMKPFFGVQADSLFIATTGYTGETGYEVIVPEAEAEALWQAFLDAGVKPCGLGARDTLRLEAGMNLYGLDMDESVNPLAANMGWTVAWAPEDRDFNGRKALEKIKAEGADKLVGLIMDAKGVIRHGMSVFFTDSDGVEQQGTITSGTFSPTLGYSIAMARVPNTIGDVAEVEMRKKRVPVKVIAPSFVRNGKQAF</sequence>
<organism>
    <name type="scientific">Shewanella piezotolerans (strain WP3 / JCM 13877)</name>
    <dbReference type="NCBI Taxonomy" id="225849"/>
    <lineage>
        <taxon>Bacteria</taxon>
        <taxon>Pseudomonadati</taxon>
        <taxon>Pseudomonadota</taxon>
        <taxon>Gammaproteobacteria</taxon>
        <taxon>Alteromonadales</taxon>
        <taxon>Shewanellaceae</taxon>
        <taxon>Shewanella</taxon>
    </lineage>
</organism>
<protein>
    <recommendedName>
        <fullName evidence="1">Aminomethyltransferase</fullName>
        <ecNumber evidence="1">2.1.2.10</ecNumber>
    </recommendedName>
    <alternativeName>
        <fullName evidence="1">Glycine cleavage system T protein</fullName>
    </alternativeName>
</protein>
<keyword id="KW-0032">Aminotransferase</keyword>
<keyword id="KW-0808">Transferase</keyword>
<evidence type="ECO:0000255" key="1">
    <source>
        <dbReference type="HAMAP-Rule" id="MF_00259"/>
    </source>
</evidence>
<feature type="chain" id="PRO_1000119204" description="Aminomethyltransferase">
    <location>
        <begin position="1"/>
        <end position="364"/>
    </location>
</feature>
<accession>B8CK16</accession>
<proteinExistence type="inferred from homology"/>
<gene>
    <name evidence="1" type="primary">gcvT</name>
    <name type="ordered locus">swp_0913</name>
</gene>
<reference key="1">
    <citation type="journal article" date="2008" name="PLoS ONE">
        <title>Environmental adaptation: genomic analysis of the piezotolerant and psychrotolerant deep-sea iron reducing bacterium Shewanella piezotolerans WP3.</title>
        <authorList>
            <person name="Wang F."/>
            <person name="Wang J."/>
            <person name="Jian H."/>
            <person name="Zhang B."/>
            <person name="Li S."/>
            <person name="Wang F."/>
            <person name="Zeng X."/>
            <person name="Gao L."/>
            <person name="Bartlett D.H."/>
            <person name="Yu J."/>
            <person name="Hu S."/>
            <person name="Xiao X."/>
        </authorList>
    </citation>
    <scope>NUCLEOTIDE SEQUENCE [LARGE SCALE GENOMIC DNA]</scope>
    <source>
        <strain>WP3 / JCM 13877</strain>
    </source>
</reference>